<proteinExistence type="inferred from homology"/>
<gene>
    <name evidence="1" type="primary">psbF</name>
</gene>
<keyword id="KW-0150">Chloroplast</keyword>
<keyword id="KW-0249">Electron transport</keyword>
<keyword id="KW-0349">Heme</keyword>
<keyword id="KW-0408">Iron</keyword>
<keyword id="KW-0472">Membrane</keyword>
<keyword id="KW-0479">Metal-binding</keyword>
<keyword id="KW-0602">Photosynthesis</keyword>
<keyword id="KW-0604">Photosystem II</keyword>
<keyword id="KW-0934">Plastid</keyword>
<keyword id="KW-0793">Thylakoid</keyword>
<keyword id="KW-0812">Transmembrane</keyword>
<keyword id="KW-1133">Transmembrane helix</keyword>
<keyword id="KW-0813">Transport</keyword>
<geneLocation type="chloroplast"/>
<evidence type="ECO:0000255" key="1">
    <source>
        <dbReference type="HAMAP-Rule" id="MF_00643"/>
    </source>
</evidence>
<name>PSBF_STIHE</name>
<dbReference type="EMBL" id="DQ630521">
    <property type="protein sequence ID" value="ABF60171.1"/>
    <property type="molecule type" value="Genomic_DNA"/>
</dbReference>
<dbReference type="RefSeq" id="YP_764441.1">
    <property type="nucleotide sequence ID" value="NC_008372.1"/>
</dbReference>
<dbReference type="SMR" id="Q06SC5"/>
<dbReference type="GeneID" id="4308414"/>
<dbReference type="GO" id="GO:0009535">
    <property type="term" value="C:chloroplast thylakoid membrane"/>
    <property type="evidence" value="ECO:0007669"/>
    <property type="project" value="UniProtKB-SubCell"/>
</dbReference>
<dbReference type="GO" id="GO:0009539">
    <property type="term" value="C:photosystem II reaction center"/>
    <property type="evidence" value="ECO:0007669"/>
    <property type="project" value="InterPro"/>
</dbReference>
<dbReference type="GO" id="GO:0009055">
    <property type="term" value="F:electron transfer activity"/>
    <property type="evidence" value="ECO:0007669"/>
    <property type="project" value="UniProtKB-UniRule"/>
</dbReference>
<dbReference type="GO" id="GO:0020037">
    <property type="term" value="F:heme binding"/>
    <property type="evidence" value="ECO:0007669"/>
    <property type="project" value="InterPro"/>
</dbReference>
<dbReference type="GO" id="GO:0005506">
    <property type="term" value="F:iron ion binding"/>
    <property type="evidence" value="ECO:0007669"/>
    <property type="project" value="UniProtKB-UniRule"/>
</dbReference>
<dbReference type="GO" id="GO:0009767">
    <property type="term" value="P:photosynthetic electron transport chain"/>
    <property type="evidence" value="ECO:0007669"/>
    <property type="project" value="InterPro"/>
</dbReference>
<dbReference type="HAMAP" id="MF_00643">
    <property type="entry name" value="PSII_PsbF"/>
    <property type="match status" value="1"/>
</dbReference>
<dbReference type="InterPro" id="IPR006241">
    <property type="entry name" value="PSII_cyt_b559_bsu"/>
</dbReference>
<dbReference type="InterPro" id="IPR006216">
    <property type="entry name" value="PSII_cyt_b559_CS"/>
</dbReference>
<dbReference type="InterPro" id="IPR013081">
    <property type="entry name" value="PSII_cyt_b559_N"/>
</dbReference>
<dbReference type="NCBIfam" id="TIGR01333">
    <property type="entry name" value="cyt_b559_beta"/>
    <property type="match status" value="1"/>
</dbReference>
<dbReference type="Pfam" id="PF00283">
    <property type="entry name" value="Cytochrom_B559"/>
    <property type="match status" value="1"/>
</dbReference>
<dbReference type="PIRSF" id="PIRSF000037">
    <property type="entry name" value="PsbF"/>
    <property type="match status" value="1"/>
</dbReference>
<dbReference type="SUPFAM" id="SSF161045">
    <property type="entry name" value="Cytochrome b559 subunits"/>
    <property type="match status" value="1"/>
</dbReference>
<dbReference type="PROSITE" id="PS00537">
    <property type="entry name" value="CYTOCHROME_B559"/>
    <property type="match status" value="1"/>
</dbReference>
<protein>
    <recommendedName>
        <fullName evidence="1">Cytochrome b559 subunit beta</fullName>
    </recommendedName>
    <alternativeName>
        <fullName evidence="1">PSII reaction center subunit VI</fullName>
    </alternativeName>
</protein>
<sequence>MTTANSEEKTYPIFTVRWLSVHALGIPTIFFLGAITAMQFIQR</sequence>
<comment type="function">
    <text evidence="1">This b-type cytochrome is tightly associated with the reaction center of photosystem II (PSII). PSII is a light-driven water:plastoquinone oxidoreductase that uses light energy to abstract electrons from H(2)O, generating O(2) and a proton gradient subsequently used for ATP formation. It consists of a core antenna complex that captures photons, and an electron transfer chain that converts photonic excitation into a charge separation.</text>
</comment>
<comment type="cofactor">
    <cofactor evidence="1">
        <name>heme b</name>
        <dbReference type="ChEBI" id="CHEBI:60344"/>
    </cofactor>
    <text evidence="1">With its partner (PsbE) binds heme. PSII binds additional chlorophylls, carotenoids and specific lipids.</text>
</comment>
<comment type="subunit">
    <text evidence="1">Heterodimer of an alpha subunit and a beta subunit. PSII is composed of 1 copy each of membrane proteins PsbA, PsbB, PsbC, PsbD, PsbE, PsbF, PsbH, PsbI, PsbJ, PsbK, PsbL, PsbM, PsbT, PsbX, PsbY, PsbZ, Psb30/Ycf12, at least 3 peripheral proteins of the oxygen-evolving complex and a large number of cofactors. It forms dimeric complexes.</text>
</comment>
<comment type="subcellular location">
    <subcellularLocation>
        <location evidence="1">Plastid</location>
        <location evidence="1">Chloroplast thylakoid membrane</location>
        <topology evidence="1">Single-pass membrane protein</topology>
    </subcellularLocation>
</comment>
<comment type="similarity">
    <text evidence="1">Belongs to the PsbE/PsbF family.</text>
</comment>
<feature type="chain" id="PRO_0000275741" description="Cytochrome b559 subunit beta">
    <location>
        <begin position="1"/>
        <end position="43"/>
    </location>
</feature>
<feature type="transmembrane region" description="Helical" evidence="1">
    <location>
        <begin position="18"/>
        <end position="34"/>
    </location>
</feature>
<feature type="binding site" description="axial binding residue" evidence="1">
    <location>
        <position position="22"/>
    </location>
    <ligand>
        <name>heme</name>
        <dbReference type="ChEBI" id="CHEBI:30413"/>
        <note>ligand shared with alpha subunit</note>
    </ligand>
    <ligandPart>
        <name>Fe</name>
        <dbReference type="ChEBI" id="CHEBI:18248"/>
    </ligandPart>
</feature>
<reference key="1">
    <citation type="journal article" date="2006" name="Mol. Genet. Genomics">
        <title>Distinctive architecture of the chloroplast genome in the chlorophycean green alga Stigeoclonium helveticum.</title>
        <authorList>
            <person name="Belanger A.-S."/>
            <person name="Brouard J.-S."/>
            <person name="Charlebois P."/>
            <person name="Otis C."/>
            <person name="Lemieux C."/>
            <person name="Turmel M."/>
        </authorList>
    </citation>
    <scope>NUCLEOTIDE SEQUENCE [LARGE SCALE GENOMIC DNA]</scope>
    <source>
        <strain>UTEX 441</strain>
    </source>
</reference>
<accession>Q06SC5</accession>
<organism>
    <name type="scientific">Stigeoclonium helveticum</name>
    <name type="common">Green alga</name>
    <dbReference type="NCBI Taxonomy" id="55999"/>
    <lineage>
        <taxon>Eukaryota</taxon>
        <taxon>Viridiplantae</taxon>
        <taxon>Chlorophyta</taxon>
        <taxon>core chlorophytes</taxon>
        <taxon>Chlorophyceae</taxon>
        <taxon>OCC clade</taxon>
        <taxon>Chaetophorales</taxon>
        <taxon>Chaetophoraceae</taxon>
        <taxon>Stigeoclonium</taxon>
    </lineage>
</organism>